<feature type="chain" id="PRO_0000170199" description="Large ribosomal subunit protein bL33">
    <location>
        <begin position="1"/>
        <end position="51"/>
    </location>
</feature>
<gene>
    <name evidence="2" type="primary">rpmG</name>
    <name type="ordered locus">PA5315</name>
</gene>
<keyword id="KW-0002">3D-structure</keyword>
<keyword id="KW-0903">Direct protein sequencing</keyword>
<keyword id="KW-1185">Reference proteome</keyword>
<keyword id="KW-0687">Ribonucleoprotein</keyword>
<keyword id="KW-0689">Ribosomal protein</keyword>
<keyword id="KW-0694">RNA-binding</keyword>
<keyword id="KW-0820">tRNA-binding</keyword>
<evidence type="ECO:0000250" key="1"/>
<evidence type="ECO:0000255" key="2">
    <source>
        <dbReference type="HAMAP-Rule" id="MF_00294"/>
    </source>
</evidence>
<evidence type="ECO:0000305" key="3"/>
<comment type="subunit">
    <text evidence="1">Part of the 50S ribosomal subunit. Cross-links to the P and E site tRNAs (By similarity).</text>
</comment>
<comment type="miscellaneous">
    <text evidence="1">Surface exposed on the 50S subunit.</text>
</comment>
<comment type="similarity">
    <text evidence="2">Belongs to the bacterial ribosomal protein bL33 family.</text>
</comment>
<reference key="1">
    <citation type="journal article" date="2000" name="Nature">
        <title>Complete genome sequence of Pseudomonas aeruginosa PAO1, an opportunistic pathogen.</title>
        <authorList>
            <person name="Stover C.K."/>
            <person name="Pham X.-Q.T."/>
            <person name="Erwin A.L."/>
            <person name="Mizoguchi S.D."/>
            <person name="Warrener P."/>
            <person name="Hickey M.J."/>
            <person name="Brinkman F.S.L."/>
            <person name="Hufnagle W.O."/>
            <person name="Kowalik D.J."/>
            <person name="Lagrou M."/>
            <person name="Garber R.L."/>
            <person name="Goltry L."/>
            <person name="Tolentino E."/>
            <person name="Westbrock-Wadman S."/>
            <person name="Yuan Y."/>
            <person name="Brody L.L."/>
            <person name="Coulter S.N."/>
            <person name="Folger K.R."/>
            <person name="Kas A."/>
            <person name="Larbig K."/>
            <person name="Lim R.M."/>
            <person name="Smith K.A."/>
            <person name="Spencer D.H."/>
            <person name="Wong G.K.-S."/>
            <person name="Wu Z."/>
            <person name="Paulsen I.T."/>
            <person name="Reizer J."/>
            <person name="Saier M.H. Jr."/>
            <person name="Hancock R.E.W."/>
            <person name="Lory S."/>
            <person name="Olson M.V."/>
        </authorList>
    </citation>
    <scope>NUCLEOTIDE SEQUENCE [LARGE SCALE GENOMIC DNA]</scope>
    <source>
        <strain>ATCC 15692 / DSM 22644 / CIP 104116 / JCM 14847 / LMG 12228 / 1C / PRS 101 / PAO1</strain>
    </source>
</reference>
<reference key="2">
    <citation type="journal article" date="1995" name="Int. J. Syst. Bacteriol.">
        <title>Comparative ribosomal protein sequence analyses of a phylogenetically defined genus, Pseudomonas, and its relatives.</title>
        <authorList>
            <person name="Ochi K."/>
        </authorList>
    </citation>
    <scope>PROTEIN SEQUENCE OF 1-18</scope>
    <source>
        <strain>ATCC 10145 / DSM 50071 / JCM 5962 / LMG 1242 / NBRC 12689 / NCIMB 8295 / NRRL B-771</strain>
    </source>
</reference>
<organism>
    <name type="scientific">Pseudomonas aeruginosa (strain ATCC 15692 / DSM 22644 / CIP 104116 / JCM 14847 / LMG 12228 / 1C / PRS 101 / PAO1)</name>
    <dbReference type="NCBI Taxonomy" id="208964"/>
    <lineage>
        <taxon>Bacteria</taxon>
        <taxon>Pseudomonadati</taxon>
        <taxon>Pseudomonadota</taxon>
        <taxon>Gammaproteobacteria</taxon>
        <taxon>Pseudomonadales</taxon>
        <taxon>Pseudomonadaceae</taxon>
        <taxon>Pseudomonas</taxon>
    </lineage>
</organism>
<accession>Q9HTN9</accession>
<accession>Q9R334</accession>
<dbReference type="EMBL" id="AE004091">
    <property type="protein sequence ID" value="AAG08700.1"/>
    <property type="molecule type" value="Genomic_DNA"/>
</dbReference>
<dbReference type="PIR" id="E82981">
    <property type="entry name" value="E82981"/>
</dbReference>
<dbReference type="RefSeq" id="NP_254002.1">
    <property type="nucleotide sequence ID" value="NC_002516.2"/>
</dbReference>
<dbReference type="RefSeq" id="WP_003096555.1">
    <property type="nucleotide sequence ID" value="NZ_QZGE01000020.1"/>
</dbReference>
<dbReference type="PDB" id="7UNR">
    <property type="method" value="EM"/>
    <property type="resolution" value="2.90 A"/>
    <property type="chains" value="5=1-51"/>
</dbReference>
<dbReference type="PDB" id="7UNU">
    <property type="method" value="EM"/>
    <property type="resolution" value="2.90 A"/>
    <property type="chains" value="5=1-51"/>
</dbReference>
<dbReference type="PDB" id="7UNV">
    <property type="method" value="EM"/>
    <property type="resolution" value="2.70 A"/>
    <property type="chains" value="5=1-51"/>
</dbReference>
<dbReference type="PDB" id="7UNW">
    <property type="method" value="EM"/>
    <property type="resolution" value="2.60 A"/>
    <property type="chains" value="5=1-51"/>
</dbReference>
<dbReference type="PDB" id="8RWG">
    <property type="method" value="EM"/>
    <property type="resolution" value="2.46 A"/>
    <property type="chains" value="6=1-51"/>
</dbReference>
<dbReference type="PDBsum" id="7UNR"/>
<dbReference type="PDBsum" id="7UNU"/>
<dbReference type="PDBsum" id="7UNV"/>
<dbReference type="PDBsum" id="7UNW"/>
<dbReference type="PDBsum" id="8RWG"/>
<dbReference type="EMDB" id="EMD-19547"/>
<dbReference type="EMDB" id="EMD-26630"/>
<dbReference type="EMDB" id="EMD-26633"/>
<dbReference type="EMDB" id="EMD-26634"/>
<dbReference type="EMDB" id="EMD-26635"/>
<dbReference type="SMR" id="Q9HTN9"/>
<dbReference type="FunCoup" id="Q9HTN9">
    <property type="interactions" value="657"/>
</dbReference>
<dbReference type="STRING" id="208964.PA5315"/>
<dbReference type="PaxDb" id="208964-PA5315"/>
<dbReference type="DNASU" id="877813"/>
<dbReference type="GeneID" id="77223848"/>
<dbReference type="GeneID" id="877813"/>
<dbReference type="KEGG" id="pae:PA5315"/>
<dbReference type="PATRIC" id="fig|208964.12.peg.5570"/>
<dbReference type="PseudoCAP" id="PA5315"/>
<dbReference type="HOGENOM" id="CLU_190949_1_1_6"/>
<dbReference type="InParanoid" id="Q9HTN9"/>
<dbReference type="OrthoDB" id="21586at2"/>
<dbReference type="PhylomeDB" id="Q9HTN9"/>
<dbReference type="BioCyc" id="PAER208964:G1FZ6-5436-MONOMER"/>
<dbReference type="PRO" id="PR:Q9HTN9"/>
<dbReference type="Proteomes" id="UP000002438">
    <property type="component" value="Chromosome"/>
</dbReference>
<dbReference type="GO" id="GO:0022625">
    <property type="term" value="C:cytosolic large ribosomal subunit"/>
    <property type="evidence" value="ECO:0000318"/>
    <property type="project" value="GO_Central"/>
</dbReference>
<dbReference type="GO" id="GO:0003735">
    <property type="term" value="F:structural constituent of ribosome"/>
    <property type="evidence" value="ECO:0000318"/>
    <property type="project" value="GO_Central"/>
</dbReference>
<dbReference type="GO" id="GO:0000049">
    <property type="term" value="F:tRNA binding"/>
    <property type="evidence" value="ECO:0007669"/>
    <property type="project" value="UniProtKB-KW"/>
</dbReference>
<dbReference type="GO" id="GO:0006412">
    <property type="term" value="P:translation"/>
    <property type="evidence" value="ECO:0007669"/>
    <property type="project" value="UniProtKB-UniRule"/>
</dbReference>
<dbReference type="FunFam" id="2.20.28.120:FF:000001">
    <property type="entry name" value="50S ribosomal protein L33"/>
    <property type="match status" value="1"/>
</dbReference>
<dbReference type="Gene3D" id="2.20.28.120">
    <property type="entry name" value="Ribosomal protein L33"/>
    <property type="match status" value="1"/>
</dbReference>
<dbReference type="HAMAP" id="MF_00294">
    <property type="entry name" value="Ribosomal_bL33"/>
    <property type="match status" value="1"/>
</dbReference>
<dbReference type="InterPro" id="IPR001705">
    <property type="entry name" value="Ribosomal_bL33"/>
</dbReference>
<dbReference type="InterPro" id="IPR018264">
    <property type="entry name" value="Ribosomal_bL33_CS"/>
</dbReference>
<dbReference type="InterPro" id="IPR038584">
    <property type="entry name" value="Ribosomal_bL33_sf"/>
</dbReference>
<dbReference type="InterPro" id="IPR011332">
    <property type="entry name" value="Ribosomal_zn-bd"/>
</dbReference>
<dbReference type="NCBIfam" id="NF001860">
    <property type="entry name" value="PRK00595.1"/>
    <property type="match status" value="1"/>
</dbReference>
<dbReference type="NCBIfam" id="TIGR01023">
    <property type="entry name" value="rpmG_bact"/>
    <property type="match status" value="1"/>
</dbReference>
<dbReference type="PANTHER" id="PTHR15238">
    <property type="entry name" value="54S RIBOSOMAL PROTEIN L39, MITOCHONDRIAL"/>
    <property type="match status" value="1"/>
</dbReference>
<dbReference type="PANTHER" id="PTHR15238:SF1">
    <property type="entry name" value="LARGE RIBOSOMAL SUBUNIT PROTEIN BL33M"/>
    <property type="match status" value="1"/>
</dbReference>
<dbReference type="Pfam" id="PF00471">
    <property type="entry name" value="Ribosomal_L33"/>
    <property type="match status" value="1"/>
</dbReference>
<dbReference type="SUPFAM" id="SSF57829">
    <property type="entry name" value="Zn-binding ribosomal proteins"/>
    <property type="match status" value="1"/>
</dbReference>
<dbReference type="PROSITE" id="PS00582">
    <property type="entry name" value="RIBOSOMAL_L33"/>
    <property type="match status" value="1"/>
</dbReference>
<name>RL33_PSEAE</name>
<protein>
    <recommendedName>
        <fullName evidence="2">Large ribosomal subunit protein bL33</fullName>
    </recommendedName>
    <alternativeName>
        <fullName evidence="3">50S ribosomal protein L33</fullName>
    </alternativeName>
</protein>
<proteinExistence type="evidence at protein level"/>
<sequence length="51" mass="6045">MRELIRLVSSAGTGHFYTTDKNKRTKPEKIEIKKYDPVVRQHVIYKEAKIK</sequence>